<organism>
    <name type="scientific">Natronomonas pharaonis (strain ATCC 35678 / DSM 2160 / CIP 103997 / JCM 8858 / NBRC 14720 / NCIMB 2260 / Gabara)</name>
    <name type="common">Halobacterium pharaonis</name>
    <dbReference type="NCBI Taxonomy" id="348780"/>
    <lineage>
        <taxon>Archaea</taxon>
        <taxon>Methanobacteriati</taxon>
        <taxon>Methanobacteriota</taxon>
        <taxon>Stenosarchaea group</taxon>
        <taxon>Halobacteria</taxon>
        <taxon>Halobacteriales</taxon>
        <taxon>Haloarculaceae</taxon>
        <taxon>Natronomonas</taxon>
    </lineage>
</organism>
<accession>Q3IRT0</accession>
<sequence length="168" mass="17825">MRVAVTGTPGTGKTTATEAVETALDVIHLNERIREEGLDAGRDEERDSLVADLDAVEAALAGEDDALIESHLAHHVDADRVVVLRCRPDILQERLVDRGEPAAKAAENAEAEALDVVLSEAVAEHGRESVYEIDTTEASPSAVAEAIEAVIDGERAPAVGTVDFTEHL</sequence>
<name>KAD6_NATPD</name>
<dbReference type="EC" id="2.7.4.3" evidence="1"/>
<dbReference type="EMBL" id="CR936257">
    <property type="protein sequence ID" value="CAI49162.1"/>
    <property type="molecule type" value="Genomic_DNA"/>
</dbReference>
<dbReference type="RefSeq" id="WP_011322790.1">
    <property type="nucleotide sequence ID" value="NC_007426.1"/>
</dbReference>
<dbReference type="SMR" id="Q3IRT0"/>
<dbReference type="STRING" id="348780.NP_2142A"/>
<dbReference type="EnsemblBacteria" id="CAI49162">
    <property type="protein sequence ID" value="CAI49162"/>
    <property type="gene ID" value="NP_2142A"/>
</dbReference>
<dbReference type="GeneID" id="3701362"/>
<dbReference type="KEGG" id="nph:NP_2142A"/>
<dbReference type="eggNOG" id="arCOG01038">
    <property type="taxonomic scope" value="Archaea"/>
</dbReference>
<dbReference type="HOGENOM" id="CLU_079096_0_1_2"/>
<dbReference type="OrthoDB" id="8730at2157"/>
<dbReference type="Proteomes" id="UP000002698">
    <property type="component" value="Chromosome"/>
</dbReference>
<dbReference type="GO" id="GO:0004017">
    <property type="term" value="F:adenylate kinase activity"/>
    <property type="evidence" value="ECO:0007669"/>
    <property type="project" value="UniProtKB-UniRule"/>
</dbReference>
<dbReference type="GO" id="GO:0005524">
    <property type="term" value="F:ATP binding"/>
    <property type="evidence" value="ECO:0007669"/>
    <property type="project" value="UniProtKB-UniRule"/>
</dbReference>
<dbReference type="GO" id="GO:0016887">
    <property type="term" value="F:ATP hydrolysis activity"/>
    <property type="evidence" value="ECO:0007669"/>
    <property type="project" value="InterPro"/>
</dbReference>
<dbReference type="GO" id="GO:0042274">
    <property type="term" value="P:ribosomal small subunit biogenesis"/>
    <property type="evidence" value="ECO:0007669"/>
    <property type="project" value="UniProtKB-UniRule"/>
</dbReference>
<dbReference type="GO" id="GO:0006364">
    <property type="term" value="P:rRNA processing"/>
    <property type="evidence" value="ECO:0007669"/>
    <property type="project" value="UniProtKB-KW"/>
</dbReference>
<dbReference type="Gene3D" id="3.40.50.300">
    <property type="entry name" value="P-loop containing nucleotide triphosphate hydrolases"/>
    <property type="match status" value="1"/>
</dbReference>
<dbReference type="HAMAP" id="MF_00039">
    <property type="entry name" value="Adenylate_kinase_AK6"/>
    <property type="match status" value="1"/>
</dbReference>
<dbReference type="InterPro" id="IPR020618">
    <property type="entry name" value="Adenyl_kinase_AK6"/>
</dbReference>
<dbReference type="InterPro" id="IPR027417">
    <property type="entry name" value="P-loop_NTPase"/>
</dbReference>
<dbReference type="PANTHER" id="PTHR12595:SF0">
    <property type="entry name" value="ADENYLATE KINASE ISOENZYME 6"/>
    <property type="match status" value="1"/>
</dbReference>
<dbReference type="PANTHER" id="PTHR12595">
    <property type="entry name" value="POS9-ACTIVATING FACTOR FAP7-RELATED"/>
    <property type="match status" value="1"/>
</dbReference>
<dbReference type="Pfam" id="PF13238">
    <property type="entry name" value="AAA_18"/>
    <property type="match status" value="1"/>
</dbReference>
<dbReference type="SUPFAM" id="SSF52540">
    <property type="entry name" value="P-loop containing nucleoside triphosphate hydrolases"/>
    <property type="match status" value="1"/>
</dbReference>
<reference key="1">
    <citation type="journal article" date="2005" name="Genome Res.">
        <title>Living with two extremes: conclusions from the genome sequence of Natronomonas pharaonis.</title>
        <authorList>
            <person name="Falb M."/>
            <person name="Pfeiffer F."/>
            <person name="Palm P."/>
            <person name="Rodewald K."/>
            <person name="Hickmann V."/>
            <person name="Tittor J."/>
            <person name="Oesterhelt D."/>
        </authorList>
    </citation>
    <scope>NUCLEOTIDE SEQUENCE [LARGE SCALE GENOMIC DNA]</scope>
    <source>
        <strain>ATCC 35678 / DSM 2160 / CIP 103997 / JCM 8858 / NBRC 14720 / NCIMB 2260 / Gabara</strain>
    </source>
</reference>
<keyword id="KW-0067">ATP-binding</keyword>
<keyword id="KW-0418">Kinase</keyword>
<keyword id="KW-0547">Nucleotide-binding</keyword>
<keyword id="KW-1185">Reference proteome</keyword>
<keyword id="KW-0690">Ribosome biogenesis</keyword>
<keyword id="KW-0698">rRNA processing</keyword>
<keyword id="KW-0808">Transferase</keyword>
<protein>
    <recommendedName>
        <fullName evidence="1">Putative adenylate kinase</fullName>
        <shortName evidence="1">AK</shortName>
        <ecNumber evidence="1">2.7.4.3</ecNumber>
    </recommendedName>
    <alternativeName>
        <fullName evidence="1">ATP-AMP transphosphorylase</fullName>
    </alternativeName>
</protein>
<gene>
    <name evidence="2" type="primary">adk2</name>
    <name type="ordered locus">NP_2142A</name>
</gene>
<feature type="chain" id="PRO_1000003093" description="Putative adenylate kinase">
    <location>
        <begin position="1"/>
        <end position="168"/>
    </location>
</feature>
<feature type="region of interest" description="NMP" evidence="1">
    <location>
        <begin position="28"/>
        <end position="51"/>
    </location>
</feature>
<feature type="region of interest" description="LID" evidence="1">
    <location>
        <begin position="97"/>
        <end position="107"/>
    </location>
</feature>
<feature type="binding site" evidence="1">
    <location>
        <position position="10"/>
    </location>
    <ligand>
        <name>ATP</name>
        <dbReference type="ChEBI" id="CHEBI:30616"/>
    </ligand>
</feature>
<feature type="binding site" evidence="1">
    <location>
        <position position="12"/>
    </location>
    <ligand>
        <name>ATP</name>
        <dbReference type="ChEBI" id="CHEBI:30616"/>
    </ligand>
</feature>
<feature type="binding site" evidence="1">
    <location>
        <position position="13"/>
    </location>
    <ligand>
        <name>ATP</name>
        <dbReference type="ChEBI" id="CHEBI:30616"/>
    </ligand>
</feature>
<feature type="binding site" evidence="1">
    <location>
        <position position="14"/>
    </location>
    <ligand>
        <name>ATP</name>
        <dbReference type="ChEBI" id="CHEBI:30616"/>
    </ligand>
</feature>
<feature type="binding site" evidence="1">
    <location>
        <position position="15"/>
    </location>
    <ligand>
        <name>ATP</name>
        <dbReference type="ChEBI" id="CHEBI:30616"/>
    </ligand>
</feature>
<feature type="binding site" evidence="1">
    <location>
        <position position="98"/>
    </location>
    <ligand>
        <name>ATP</name>
        <dbReference type="ChEBI" id="CHEBI:30616"/>
    </ligand>
</feature>
<comment type="function">
    <text evidence="1">Broad-specificity nucleoside monophosphate (NMP) kinase that catalyzes the reversible transfer of the terminal phosphate group between nucleoside triphosphates and monophosphates. Also has ATPase activity. Involved in the late maturation steps of the 30S ribosomal particles, specifically 16S rRNA maturation. While NMP activity is not required for ribosome maturation, ATPase activity is. Associates transiently with small ribosomal subunit protein uS11. ATP hydrolysis breaks the interaction with uS11. May temporarily remove uS11 from the ribosome to enable a conformational change of the ribosomal RNA that is needed for the final maturation step of the small ribosomal subunit.</text>
</comment>
<comment type="catalytic activity">
    <reaction evidence="1">
        <text>AMP + ATP = 2 ADP</text>
        <dbReference type="Rhea" id="RHEA:12973"/>
        <dbReference type="ChEBI" id="CHEBI:30616"/>
        <dbReference type="ChEBI" id="CHEBI:456215"/>
        <dbReference type="ChEBI" id="CHEBI:456216"/>
        <dbReference type="EC" id="2.7.4.3"/>
    </reaction>
</comment>
<comment type="catalytic activity">
    <reaction evidence="1">
        <text>ATP + H2O = ADP + phosphate + H(+)</text>
        <dbReference type="Rhea" id="RHEA:13065"/>
        <dbReference type="ChEBI" id="CHEBI:15377"/>
        <dbReference type="ChEBI" id="CHEBI:15378"/>
        <dbReference type="ChEBI" id="CHEBI:30616"/>
        <dbReference type="ChEBI" id="CHEBI:43474"/>
        <dbReference type="ChEBI" id="CHEBI:456216"/>
    </reaction>
</comment>
<comment type="subunit">
    <text evidence="1">Interacts with uS11. Not a structural component of 40S pre-ribosomes, but transiently interacts with them by binding to uS11.</text>
</comment>
<comment type="similarity">
    <text evidence="1">Belongs to the adenylate kinase family. AK6 subfamily.</text>
</comment>
<evidence type="ECO:0000255" key="1">
    <source>
        <dbReference type="HAMAP-Rule" id="MF_00039"/>
    </source>
</evidence>
<evidence type="ECO:0000312" key="2">
    <source>
        <dbReference type="EMBL" id="CAI49162.1"/>
    </source>
</evidence>
<proteinExistence type="inferred from homology"/>